<keyword id="KW-1185">Reference proteome</keyword>
<keyword id="KW-0687">Ribonucleoprotein</keyword>
<keyword id="KW-0689">Ribosomal protein</keyword>
<keyword id="KW-0694">RNA-binding</keyword>
<keyword id="KW-0699">rRNA-binding</keyword>
<evidence type="ECO:0000255" key="1">
    <source>
        <dbReference type="HAMAP-Rule" id="MF_00500"/>
    </source>
</evidence>
<evidence type="ECO:0000305" key="2"/>
<proteinExistence type="inferred from homology"/>
<dbReference type="EMBL" id="CP000555">
    <property type="protein sequence ID" value="ABM95980.1"/>
    <property type="molecule type" value="Genomic_DNA"/>
</dbReference>
<dbReference type="RefSeq" id="WP_011830603.1">
    <property type="nucleotide sequence ID" value="NC_008825.1"/>
</dbReference>
<dbReference type="SMR" id="A2SK91"/>
<dbReference type="STRING" id="420662.Mpe_A3027"/>
<dbReference type="KEGG" id="mpt:Mpe_A3027"/>
<dbReference type="eggNOG" id="COG0268">
    <property type="taxonomic scope" value="Bacteria"/>
</dbReference>
<dbReference type="HOGENOM" id="CLU_160655_4_0_4"/>
<dbReference type="Proteomes" id="UP000000366">
    <property type="component" value="Chromosome"/>
</dbReference>
<dbReference type="GO" id="GO:0005829">
    <property type="term" value="C:cytosol"/>
    <property type="evidence" value="ECO:0007669"/>
    <property type="project" value="TreeGrafter"/>
</dbReference>
<dbReference type="GO" id="GO:0015935">
    <property type="term" value="C:small ribosomal subunit"/>
    <property type="evidence" value="ECO:0007669"/>
    <property type="project" value="TreeGrafter"/>
</dbReference>
<dbReference type="GO" id="GO:0070181">
    <property type="term" value="F:small ribosomal subunit rRNA binding"/>
    <property type="evidence" value="ECO:0007669"/>
    <property type="project" value="TreeGrafter"/>
</dbReference>
<dbReference type="GO" id="GO:0003735">
    <property type="term" value="F:structural constituent of ribosome"/>
    <property type="evidence" value="ECO:0007669"/>
    <property type="project" value="InterPro"/>
</dbReference>
<dbReference type="GO" id="GO:0006412">
    <property type="term" value="P:translation"/>
    <property type="evidence" value="ECO:0007669"/>
    <property type="project" value="UniProtKB-UniRule"/>
</dbReference>
<dbReference type="FunFam" id="1.20.58.110:FF:000001">
    <property type="entry name" value="30S ribosomal protein S20"/>
    <property type="match status" value="1"/>
</dbReference>
<dbReference type="Gene3D" id="1.20.58.110">
    <property type="entry name" value="Ribosomal protein S20"/>
    <property type="match status" value="1"/>
</dbReference>
<dbReference type="HAMAP" id="MF_00500">
    <property type="entry name" value="Ribosomal_bS20"/>
    <property type="match status" value="1"/>
</dbReference>
<dbReference type="InterPro" id="IPR002583">
    <property type="entry name" value="Ribosomal_bS20"/>
</dbReference>
<dbReference type="InterPro" id="IPR036510">
    <property type="entry name" value="Ribosomal_bS20_sf"/>
</dbReference>
<dbReference type="NCBIfam" id="TIGR00029">
    <property type="entry name" value="S20"/>
    <property type="match status" value="1"/>
</dbReference>
<dbReference type="PANTHER" id="PTHR33398">
    <property type="entry name" value="30S RIBOSOMAL PROTEIN S20"/>
    <property type="match status" value="1"/>
</dbReference>
<dbReference type="PANTHER" id="PTHR33398:SF1">
    <property type="entry name" value="SMALL RIBOSOMAL SUBUNIT PROTEIN BS20C"/>
    <property type="match status" value="1"/>
</dbReference>
<dbReference type="Pfam" id="PF01649">
    <property type="entry name" value="Ribosomal_S20p"/>
    <property type="match status" value="1"/>
</dbReference>
<dbReference type="SUPFAM" id="SSF46992">
    <property type="entry name" value="Ribosomal protein S20"/>
    <property type="match status" value="1"/>
</dbReference>
<name>RS20_METPP</name>
<protein>
    <recommendedName>
        <fullName evidence="1">Small ribosomal subunit protein bS20</fullName>
    </recommendedName>
    <alternativeName>
        <fullName evidence="2">30S ribosomal protein S20</fullName>
    </alternativeName>
</protein>
<organism>
    <name type="scientific">Methylibium petroleiphilum (strain ATCC BAA-1232 / LMG 22953 / PM1)</name>
    <dbReference type="NCBI Taxonomy" id="420662"/>
    <lineage>
        <taxon>Bacteria</taxon>
        <taxon>Pseudomonadati</taxon>
        <taxon>Pseudomonadota</taxon>
        <taxon>Betaproteobacteria</taxon>
        <taxon>Burkholderiales</taxon>
        <taxon>Sphaerotilaceae</taxon>
        <taxon>Methylibium</taxon>
    </lineage>
</organism>
<accession>A2SK91</accession>
<feature type="chain" id="PRO_1000014603" description="Small ribosomal subunit protein bS20">
    <location>
        <begin position="1"/>
        <end position="97"/>
    </location>
</feature>
<gene>
    <name evidence="1" type="primary">rpsT</name>
    <name type="ordered locus">Mpe_A3027</name>
</gene>
<comment type="function">
    <text evidence="1">Binds directly to 16S ribosomal RNA.</text>
</comment>
<comment type="similarity">
    <text evidence="1">Belongs to the bacterial ribosomal protein bS20 family.</text>
</comment>
<sequence length="97" mass="10472">MATSSKVKKSVRIASGRKRVRQDVRLNAANTSLRSKFRTAIKGVLKAVATGDKAKAGETFKSAQKVIDSIADKGLFHKNKAARYKSRLSAKIKALAA</sequence>
<reference key="1">
    <citation type="journal article" date="2007" name="J. Bacteriol.">
        <title>Whole-genome analysis of the methyl tert-butyl ether-degrading beta-proteobacterium Methylibium petroleiphilum PM1.</title>
        <authorList>
            <person name="Kane S.R."/>
            <person name="Chakicherla A.Y."/>
            <person name="Chain P.S.G."/>
            <person name="Schmidt R."/>
            <person name="Shin M.W."/>
            <person name="Legler T.C."/>
            <person name="Scow K.M."/>
            <person name="Larimer F.W."/>
            <person name="Lucas S.M."/>
            <person name="Richardson P.M."/>
            <person name="Hristova K.R."/>
        </authorList>
    </citation>
    <scope>NUCLEOTIDE SEQUENCE [LARGE SCALE GENOMIC DNA]</scope>
    <source>
        <strain>ATCC BAA-1232 / LMG 22953 / PM1</strain>
    </source>
</reference>